<accession>Q57810</accession>
<keyword id="KW-1185">Reference proteome</keyword>
<reference key="1">
    <citation type="journal article" date="1996" name="Science">
        <title>Complete genome sequence of the methanogenic archaeon, Methanococcus jannaschii.</title>
        <authorList>
            <person name="Bult C.J."/>
            <person name="White O."/>
            <person name="Olsen G.J."/>
            <person name="Zhou L."/>
            <person name="Fleischmann R.D."/>
            <person name="Sutton G.G."/>
            <person name="Blake J.A."/>
            <person name="FitzGerald L.M."/>
            <person name="Clayton R.A."/>
            <person name="Gocayne J.D."/>
            <person name="Kerlavage A.R."/>
            <person name="Dougherty B.A."/>
            <person name="Tomb J.-F."/>
            <person name="Adams M.D."/>
            <person name="Reich C.I."/>
            <person name="Overbeek R."/>
            <person name="Kirkness E.F."/>
            <person name="Weinstock K.G."/>
            <person name="Merrick J.M."/>
            <person name="Glodek A."/>
            <person name="Scott J.L."/>
            <person name="Geoghagen N.S.M."/>
            <person name="Weidman J.F."/>
            <person name="Fuhrmann J.L."/>
            <person name="Nguyen D."/>
            <person name="Utterback T.R."/>
            <person name="Kelley J.M."/>
            <person name="Peterson J.D."/>
            <person name="Sadow P.W."/>
            <person name="Hanna M.C."/>
            <person name="Cotton M.D."/>
            <person name="Roberts K.M."/>
            <person name="Hurst M.A."/>
            <person name="Kaine B.P."/>
            <person name="Borodovsky M."/>
            <person name="Klenk H.-P."/>
            <person name="Fraser C.M."/>
            <person name="Smith H.O."/>
            <person name="Woese C.R."/>
            <person name="Venter J.C."/>
        </authorList>
    </citation>
    <scope>NUCLEOTIDE SEQUENCE [LARGE SCALE GENOMIC DNA]</scope>
    <source>
        <strain>ATCC 43067 / DSM 2661 / JAL-1 / JCM 10045 / NBRC 100440</strain>
    </source>
</reference>
<gene>
    <name type="ordered locus">MJ0364</name>
</gene>
<protein>
    <recommendedName>
        <fullName>Uncharacterized protein MJ0364</fullName>
    </recommendedName>
</protein>
<proteinExistence type="predicted"/>
<feature type="chain" id="PRO_0000106833" description="Uncharacterized protein MJ0364">
    <location>
        <begin position="1"/>
        <end position="114"/>
    </location>
</feature>
<dbReference type="EMBL" id="L77117">
    <property type="protein sequence ID" value="AAB98355.1"/>
    <property type="molecule type" value="Genomic_DNA"/>
</dbReference>
<dbReference type="PIR" id="D64345">
    <property type="entry name" value="D64345"/>
</dbReference>
<dbReference type="STRING" id="243232.MJ_0364"/>
<dbReference type="PaxDb" id="243232-MJ_0364"/>
<dbReference type="EnsemblBacteria" id="AAB98355">
    <property type="protein sequence ID" value="AAB98355"/>
    <property type="gene ID" value="MJ_0364"/>
</dbReference>
<dbReference type="KEGG" id="mja:MJ_0364"/>
<dbReference type="HOGENOM" id="CLU_2115496_0_0_2"/>
<dbReference type="InParanoid" id="Q57810"/>
<dbReference type="Proteomes" id="UP000000805">
    <property type="component" value="Chromosome"/>
</dbReference>
<organism>
    <name type="scientific">Methanocaldococcus jannaschii (strain ATCC 43067 / DSM 2661 / JAL-1 / JCM 10045 / NBRC 100440)</name>
    <name type="common">Methanococcus jannaschii</name>
    <dbReference type="NCBI Taxonomy" id="243232"/>
    <lineage>
        <taxon>Archaea</taxon>
        <taxon>Methanobacteriati</taxon>
        <taxon>Methanobacteriota</taxon>
        <taxon>Methanomada group</taxon>
        <taxon>Methanococci</taxon>
        <taxon>Methanococcales</taxon>
        <taxon>Methanocaldococcaceae</taxon>
        <taxon>Methanocaldococcus</taxon>
    </lineage>
</organism>
<name>Y364_METJA</name>
<sequence>MGSMIEINFSHDYFKLREQRFTTIRSKHYLKNKGLRVGDVVKIKHPSGEFPAKIVGVEVKRICDIPLEILKKDAEFEGFNIKTHQDFVDLLNSFIPYKSNKLTTEKAIIYLERV</sequence>